<protein>
    <recommendedName>
        <fullName evidence="1">Glutamate-1-semialdehyde 2,1-aminomutase</fullName>
        <shortName evidence="1">GSA</shortName>
        <ecNumber evidence="1">5.4.3.8</ecNumber>
    </recommendedName>
    <alternativeName>
        <fullName evidence="1">Glutamate-1-semialdehyde aminotransferase</fullName>
        <shortName evidence="1">GSA-AT</shortName>
    </alternativeName>
</protein>
<dbReference type="EC" id="5.4.3.8" evidence="1"/>
<dbReference type="EMBL" id="FM209186">
    <property type="protein sequence ID" value="CAW25725.1"/>
    <property type="molecule type" value="Genomic_DNA"/>
</dbReference>
<dbReference type="RefSeq" id="WP_003093150.1">
    <property type="nucleotide sequence ID" value="NC_011770.1"/>
</dbReference>
<dbReference type="SMR" id="B7V9D9"/>
<dbReference type="KEGG" id="pag:PLES_09981"/>
<dbReference type="HOGENOM" id="CLU_016922_1_5_6"/>
<dbReference type="UniPathway" id="UPA00251">
    <property type="reaction ID" value="UER00317"/>
</dbReference>
<dbReference type="GO" id="GO:0005737">
    <property type="term" value="C:cytoplasm"/>
    <property type="evidence" value="ECO:0007669"/>
    <property type="project" value="UniProtKB-SubCell"/>
</dbReference>
<dbReference type="GO" id="GO:0042286">
    <property type="term" value="F:glutamate-1-semialdehyde 2,1-aminomutase activity"/>
    <property type="evidence" value="ECO:0007669"/>
    <property type="project" value="UniProtKB-UniRule"/>
</dbReference>
<dbReference type="GO" id="GO:0030170">
    <property type="term" value="F:pyridoxal phosphate binding"/>
    <property type="evidence" value="ECO:0007669"/>
    <property type="project" value="InterPro"/>
</dbReference>
<dbReference type="GO" id="GO:0008483">
    <property type="term" value="F:transaminase activity"/>
    <property type="evidence" value="ECO:0007669"/>
    <property type="project" value="InterPro"/>
</dbReference>
<dbReference type="GO" id="GO:0006782">
    <property type="term" value="P:protoporphyrinogen IX biosynthetic process"/>
    <property type="evidence" value="ECO:0007669"/>
    <property type="project" value="UniProtKB-UniRule"/>
</dbReference>
<dbReference type="CDD" id="cd00610">
    <property type="entry name" value="OAT_like"/>
    <property type="match status" value="1"/>
</dbReference>
<dbReference type="FunFam" id="3.40.640.10:FF:000021">
    <property type="entry name" value="Glutamate-1-semialdehyde 2,1-aminomutase"/>
    <property type="match status" value="1"/>
</dbReference>
<dbReference type="Gene3D" id="3.90.1150.10">
    <property type="entry name" value="Aspartate Aminotransferase, domain 1"/>
    <property type="match status" value="1"/>
</dbReference>
<dbReference type="Gene3D" id="3.40.640.10">
    <property type="entry name" value="Type I PLP-dependent aspartate aminotransferase-like (Major domain)"/>
    <property type="match status" value="1"/>
</dbReference>
<dbReference type="HAMAP" id="MF_00375">
    <property type="entry name" value="HemL_aminotrans_3"/>
    <property type="match status" value="1"/>
</dbReference>
<dbReference type="InterPro" id="IPR004639">
    <property type="entry name" value="4pyrrol_synth_GluAld_NH2Trfase"/>
</dbReference>
<dbReference type="InterPro" id="IPR005814">
    <property type="entry name" value="Aminotrans_3"/>
</dbReference>
<dbReference type="InterPro" id="IPR049704">
    <property type="entry name" value="Aminotrans_3_PPA_site"/>
</dbReference>
<dbReference type="InterPro" id="IPR015424">
    <property type="entry name" value="PyrdxlP-dep_Trfase"/>
</dbReference>
<dbReference type="InterPro" id="IPR015421">
    <property type="entry name" value="PyrdxlP-dep_Trfase_major"/>
</dbReference>
<dbReference type="InterPro" id="IPR015422">
    <property type="entry name" value="PyrdxlP-dep_Trfase_small"/>
</dbReference>
<dbReference type="NCBIfam" id="TIGR00713">
    <property type="entry name" value="hemL"/>
    <property type="match status" value="1"/>
</dbReference>
<dbReference type="NCBIfam" id="NF000818">
    <property type="entry name" value="PRK00062.1"/>
    <property type="match status" value="1"/>
</dbReference>
<dbReference type="PANTHER" id="PTHR43713">
    <property type="entry name" value="GLUTAMATE-1-SEMIALDEHYDE 2,1-AMINOMUTASE"/>
    <property type="match status" value="1"/>
</dbReference>
<dbReference type="PANTHER" id="PTHR43713:SF3">
    <property type="entry name" value="GLUTAMATE-1-SEMIALDEHYDE 2,1-AMINOMUTASE 1, CHLOROPLASTIC-RELATED"/>
    <property type="match status" value="1"/>
</dbReference>
<dbReference type="Pfam" id="PF00202">
    <property type="entry name" value="Aminotran_3"/>
    <property type="match status" value="1"/>
</dbReference>
<dbReference type="SUPFAM" id="SSF53383">
    <property type="entry name" value="PLP-dependent transferases"/>
    <property type="match status" value="1"/>
</dbReference>
<dbReference type="PROSITE" id="PS00600">
    <property type="entry name" value="AA_TRANSFER_CLASS_3"/>
    <property type="match status" value="1"/>
</dbReference>
<feature type="chain" id="PRO_1000121910" description="Glutamate-1-semialdehyde 2,1-aminomutase">
    <location>
        <begin position="1"/>
        <end position="427"/>
    </location>
</feature>
<feature type="modified residue" description="N6-(pyridoxal phosphate)lysine" evidence="1">
    <location>
        <position position="265"/>
    </location>
</feature>
<reference key="1">
    <citation type="journal article" date="2009" name="Genome Res.">
        <title>Newly introduced genomic prophage islands are critical determinants of in vivo competitiveness in the Liverpool epidemic strain of Pseudomonas aeruginosa.</title>
        <authorList>
            <person name="Winstanley C."/>
            <person name="Langille M.G.I."/>
            <person name="Fothergill J.L."/>
            <person name="Kukavica-Ibrulj I."/>
            <person name="Paradis-Bleau C."/>
            <person name="Sanschagrin F."/>
            <person name="Thomson N.R."/>
            <person name="Winsor G.L."/>
            <person name="Quail M.A."/>
            <person name="Lennard N."/>
            <person name="Bignell A."/>
            <person name="Clarke L."/>
            <person name="Seeger K."/>
            <person name="Saunders D."/>
            <person name="Harris D."/>
            <person name="Parkhill J."/>
            <person name="Hancock R.E.W."/>
            <person name="Brinkman F.S.L."/>
            <person name="Levesque R.C."/>
        </authorList>
    </citation>
    <scope>NUCLEOTIDE SEQUENCE [LARGE SCALE GENOMIC DNA]</scope>
    <source>
        <strain>LESB58</strain>
    </source>
</reference>
<evidence type="ECO:0000255" key="1">
    <source>
        <dbReference type="HAMAP-Rule" id="MF_00375"/>
    </source>
</evidence>
<gene>
    <name evidence="1" type="primary">hemL</name>
    <name type="ordered locus">PLES_09981</name>
</gene>
<accession>B7V9D9</accession>
<comment type="catalytic activity">
    <reaction evidence="1">
        <text>(S)-4-amino-5-oxopentanoate = 5-aminolevulinate</text>
        <dbReference type="Rhea" id="RHEA:14265"/>
        <dbReference type="ChEBI" id="CHEBI:57501"/>
        <dbReference type="ChEBI" id="CHEBI:356416"/>
        <dbReference type="EC" id="5.4.3.8"/>
    </reaction>
</comment>
<comment type="cofactor">
    <cofactor evidence="1">
        <name>pyridoxal 5'-phosphate</name>
        <dbReference type="ChEBI" id="CHEBI:597326"/>
    </cofactor>
</comment>
<comment type="pathway">
    <text evidence="1">Porphyrin-containing compound metabolism; protoporphyrin-IX biosynthesis; 5-aminolevulinate from L-glutamyl-tRNA(Glu): step 2/2.</text>
</comment>
<comment type="subunit">
    <text evidence="1">Homodimer.</text>
</comment>
<comment type="subcellular location">
    <subcellularLocation>
        <location evidence="1">Cytoplasm</location>
    </subcellularLocation>
</comment>
<comment type="similarity">
    <text evidence="1">Belongs to the class-III pyridoxal-phosphate-dependent aminotransferase family. HemL subfamily.</text>
</comment>
<organism>
    <name type="scientific">Pseudomonas aeruginosa (strain LESB58)</name>
    <dbReference type="NCBI Taxonomy" id="557722"/>
    <lineage>
        <taxon>Bacteria</taxon>
        <taxon>Pseudomonadati</taxon>
        <taxon>Pseudomonadota</taxon>
        <taxon>Gammaproteobacteria</taxon>
        <taxon>Pseudomonadales</taxon>
        <taxon>Pseudomonadaceae</taxon>
        <taxon>Pseudomonas</taxon>
    </lineage>
</organism>
<keyword id="KW-0963">Cytoplasm</keyword>
<keyword id="KW-0413">Isomerase</keyword>
<keyword id="KW-0627">Porphyrin biosynthesis</keyword>
<keyword id="KW-0663">Pyridoxal phosphate</keyword>
<sequence length="427" mass="45398">MSRSETLFNNAQKHIPGGVNSPVRAFKSVGGTPLFFKHAEGAYVLDEDDKRYVDYVGSWGPMILGHSHPDVLDAVRRQLDHGLSYGAPTALEVEMADLVCSMVPSMEMVRMVSSGTEATMSAIRLARGYTGRDSIIKFEGCYHGHSDSLLVKAGSGALTFGVPNSPGVPAAFAKHTLTLPFNDIEAVRKTLGEVGKEVACIIVEPVAGNMNCVPPAPGFLEGLREACDEHGVVLIFDEVMTGFRVALGGAQAYYGVTPDLSTFGKIIGGGMPVGAFGGKREIMQQISPLGPVYQAGTLSGNPLAMAAGLTTLRLISRPGFHDELTAYTTRMLDGLQQRADAAGIPFVTTQAGGMFGLYFSGADAIVTFEDVMASDVERFKRFFHLMLDGGVYLAPSAFEAGFTSIAHGDKELEITLNAAEKAFAALK</sequence>
<proteinExistence type="inferred from homology"/>
<name>GSA_PSEA8</name>